<sequence>MSNIHPTALVADGASLHPTVTVGPYAVIGPQAVIGPGCSVGAHCVIEGRTTLGADNRIFPFACLGAAPQDKKYAGEPTQLVIGQRNTIREFCTFNRGTVQDRGLTSIGDDNWIMAYVHIAHDCVVGNQTILANNATLAGHVQVADLAIIGGLTGVHQFVKIGAHAMAGFASRIAQDVPPFMMVDGNPLAVRGLNLEGLRRRGFPAARMAGIKQMYRLLYRQGLTLEAACQAMAELPAAHPQAAADVALMRAFLAACTRGIVR</sequence>
<dbReference type="EC" id="2.3.1.129" evidence="1"/>
<dbReference type="EMBL" id="CP000542">
    <property type="protein sequence ID" value="ABM57211.1"/>
    <property type="molecule type" value="Genomic_DNA"/>
</dbReference>
<dbReference type="RefSeq" id="WP_011809218.1">
    <property type="nucleotide sequence ID" value="NC_008786.1"/>
</dbReference>
<dbReference type="SMR" id="A1WHV4"/>
<dbReference type="STRING" id="391735.Veis_1450"/>
<dbReference type="GeneID" id="76460075"/>
<dbReference type="KEGG" id="vei:Veis_1450"/>
<dbReference type="eggNOG" id="COG1043">
    <property type="taxonomic scope" value="Bacteria"/>
</dbReference>
<dbReference type="HOGENOM" id="CLU_061249_0_0_4"/>
<dbReference type="OrthoDB" id="9807278at2"/>
<dbReference type="UniPathway" id="UPA00359">
    <property type="reaction ID" value="UER00477"/>
</dbReference>
<dbReference type="Proteomes" id="UP000000374">
    <property type="component" value="Chromosome"/>
</dbReference>
<dbReference type="GO" id="GO:0005737">
    <property type="term" value="C:cytoplasm"/>
    <property type="evidence" value="ECO:0007669"/>
    <property type="project" value="UniProtKB-SubCell"/>
</dbReference>
<dbReference type="GO" id="GO:0016020">
    <property type="term" value="C:membrane"/>
    <property type="evidence" value="ECO:0007669"/>
    <property type="project" value="GOC"/>
</dbReference>
<dbReference type="GO" id="GO:0008780">
    <property type="term" value="F:acyl-[acyl-carrier-protein]-UDP-N-acetylglucosamine O-acyltransferase activity"/>
    <property type="evidence" value="ECO:0007669"/>
    <property type="project" value="UniProtKB-UniRule"/>
</dbReference>
<dbReference type="GO" id="GO:0009245">
    <property type="term" value="P:lipid A biosynthetic process"/>
    <property type="evidence" value="ECO:0007669"/>
    <property type="project" value="UniProtKB-UniRule"/>
</dbReference>
<dbReference type="CDD" id="cd03351">
    <property type="entry name" value="LbH_UDP-GlcNAc_AT"/>
    <property type="match status" value="1"/>
</dbReference>
<dbReference type="Gene3D" id="2.160.10.10">
    <property type="entry name" value="Hexapeptide repeat proteins"/>
    <property type="match status" value="1"/>
</dbReference>
<dbReference type="Gene3D" id="1.20.1180.10">
    <property type="entry name" value="Udp N-acetylglucosamine O-acyltransferase, C-terminal domain"/>
    <property type="match status" value="1"/>
</dbReference>
<dbReference type="HAMAP" id="MF_00387">
    <property type="entry name" value="LpxA"/>
    <property type="match status" value="1"/>
</dbReference>
<dbReference type="InterPro" id="IPR029098">
    <property type="entry name" value="Acetyltransf_C"/>
</dbReference>
<dbReference type="InterPro" id="IPR037157">
    <property type="entry name" value="Acetyltransf_C_sf"/>
</dbReference>
<dbReference type="InterPro" id="IPR001451">
    <property type="entry name" value="Hexapep"/>
</dbReference>
<dbReference type="InterPro" id="IPR018357">
    <property type="entry name" value="Hexapep_transf_CS"/>
</dbReference>
<dbReference type="InterPro" id="IPR010137">
    <property type="entry name" value="Lipid_A_LpxA"/>
</dbReference>
<dbReference type="InterPro" id="IPR011004">
    <property type="entry name" value="Trimer_LpxA-like_sf"/>
</dbReference>
<dbReference type="NCBIfam" id="TIGR01852">
    <property type="entry name" value="lipid_A_lpxA"/>
    <property type="match status" value="1"/>
</dbReference>
<dbReference type="NCBIfam" id="NF003657">
    <property type="entry name" value="PRK05289.1"/>
    <property type="match status" value="1"/>
</dbReference>
<dbReference type="PANTHER" id="PTHR43480">
    <property type="entry name" value="ACYL-[ACYL-CARRIER-PROTEIN]--UDP-N-ACETYLGLUCOSAMINE O-ACYLTRANSFERASE"/>
    <property type="match status" value="1"/>
</dbReference>
<dbReference type="PANTHER" id="PTHR43480:SF1">
    <property type="entry name" value="ACYL-[ACYL-CARRIER-PROTEIN]--UDP-N-ACETYLGLUCOSAMINE O-ACYLTRANSFERASE, MITOCHONDRIAL-RELATED"/>
    <property type="match status" value="1"/>
</dbReference>
<dbReference type="Pfam" id="PF13720">
    <property type="entry name" value="Acetyltransf_11"/>
    <property type="match status" value="1"/>
</dbReference>
<dbReference type="Pfam" id="PF00132">
    <property type="entry name" value="Hexapep"/>
    <property type="match status" value="2"/>
</dbReference>
<dbReference type="PIRSF" id="PIRSF000456">
    <property type="entry name" value="UDP-GlcNAc_acltr"/>
    <property type="match status" value="1"/>
</dbReference>
<dbReference type="SUPFAM" id="SSF51161">
    <property type="entry name" value="Trimeric LpxA-like enzymes"/>
    <property type="match status" value="1"/>
</dbReference>
<dbReference type="PROSITE" id="PS00101">
    <property type="entry name" value="HEXAPEP_TRANSFERASES"/>
    <property type="match status" value="1"/>
</dbReference>
<reference key="1">
    <citation type="submission" date="2006-12" db="EMBL/GenBank/DDBJ databases">
        <title>Complete sequence of chromosome 1 of Verminephrobacter eiseniae EF01-2.</title>
        <authorList>
            <person name="Copeland A."/>
            <person name="Lucas S."/>
            <person name="Lapidus A."/>
            <person name="Barry K."/>
            <person name="Detter J.C."/>
            <person name="Glavina del Rio T."/>
            <person name="Dalin E."/>
            <person name="Tice H."/>
            <person name="Pitluck S."/>
            <person name="Chertkov O."/>
            <person name="Brettin T."/>
            <person name="Bruce D."/>
            <person name="Han C."/>
            <person name="Tapia R."/>
            <person name="Gilna P."/>
            <person name="Schmutz J."/>
            <person name="Larimer F."/>
            <person name="Land M."/>
            <person name="Hauser L."/>
            <person name="Kyrpides N."/>
            <person name="Kim E."/>
            <person name="Stahl D."/>
            <person name="Richardson P."/>
        </authorList>
    </citation>
    <scope>NUCLEOTIDE SEQUENCE [LARGE SCALE GENOMIC DNA]</scope>
    <source>
        <strain>EF01-2</strain>
    </source>
</reference>
<protein>
    <recommendedName>
        <fullName evidence="1">Acyl-[acyl-carrier-protein]--UDP-N-acetylglucosamine O-acyltransferase</fullName>
        <shortName evidence="1">UDP-N-acetylglucosamine acyltransferase</shortName>
        <ecNumber evidence="1">2.3.1.129</ecNumber>
    </recommendedName>
</protein>
<name>LPXA_VEREI</name>
<accession>A1WHV4</accession>
<evidence type="ECO:0000255" key="1">
    <source>
        <dbReference type="HAMAP-Rule" id="MF_00387"/>
    </source>
</evidence>
<proteinExistence type="inferred from homology"/>
<feature type="chain" id="PRO_1000013182" description="Acyl-[acyl-carrier-protein]--UDP-N-acetylglucosamine O-acyltransferase">
    <location>
        <begin position="1"/>
        <end position="262"/>
    </location>
</feature>
<organism>
    <name type="scientific">Verminephrobacter eiseniae (strain EF01-2)</name>
    <dbReference type="NCBI Taxonomy" id="391735"/>
    <lineage>
        <taxon>Bacteria</taxon>
        <taxon>Pseudomonadati</taxon>
        <taxon>Pseudomonadota</taxon>
        <taxon>Betaproteobacteria</taxon>
        <taxon>Burkholderiales</taxon>
        <taxon>Comamonadaceae</taxon>
        <taxon>Verminephrobacter</taxon>
    </lineage>
</organism>
<comment type="function">
    <text evidence="1">Involved in the biosynthesis of lipid A, a phosphorylated glycolipid that anchors the lipopolysaccharide to the outer membrane of the cell.</text>
</comment>
<comment type="catalytic activity">
    <reaction evidence="1">
        <text>a (3R)-hydroxyacyl-[ACP] + UDP-N-acetyl-alpha-D-glucosamine = a UDP-3-O-[(3R)-3-hydroxyacyl]-N-acetyl-alpha-D-glucosamine + holo-[ACP]</text>
        <dbReference type="Rhea" id="RHEA:67812"/>
        <dbReference type="Rhea" id="RHEA-COMP:9685"/>
        <dbReference type="Rhea" id="RHEA-COMP:9945"/>
        <dbReference type="ChEBI" id="CHEBI:57705"/>
        <dbReference type="ChEBI" id="CHEBI:64479"/>
        <dbReference type="ChEBI" id="CHEBI:78827"/>
        <dbReference type="ChEBI" id="CHEBI:173225"/>
        <dbReference type="EC" id="2.3.1.129"/>
    </reaction>
</comment>
<comment type="pathway">
    <text evidence="1">Glycolipid biosynthesis; lipid IV(A) biosynthesis; lipid IV(A) from (3R)-3-hydroxytetradecanoyl-[acyl-carrier-protein] and UDP-N-acetyl-alpha-D-glucosamine: step 1/6.</text>
</comment>
<comment type="subunit">
    <text evidence="1">Homotrimer.</text>
</comment>
<comment type="subcellular location">
    <subcellularLocation>
        <location evidence="1">Cytoplasm</location>
    </subcellularLocation>
</comment>
<comment type="similarity">
    <text evidence="1">Belongs to the transferase hexapeptide repeat family. LpxA subfamily.</text>
</comment>
<keyword id="KW-0012">Acyltransferase</keyword>
<keyword id="KW-0963">Cytoplasm</keyword>
<keyword id="KW-0441">Lipid A biosynthesis</keyword>
<keyword id="KW-0444">Lipid biosynthesis</keyword>
<keyword id="KW-0443">Lipid metabolism</keyword>
<keyword id="KW-1185">Reference proteome</keyword>
<keyword id="KW-0677">Repeat</keyword>
<keyword id="KW-0808">Transferase</keyword>
<gene>
    <name evidence="1" type="primary">lpxA</name>
    <name type="ordered locus">Veis_1450</name>
</gene>